<evidence type="ECO:0000250" key="1"/>
<evidence type="ECO:0000255" key="2">
    <source>
        <dbReference type="PROSITE-ProRule" id="PRU00176"/>
    </source>
</evidence>
<evidence type="ECO:0000256" key="3">
    <source>
        <dbReference type="SAM" id="MobiDB-lite"/>
    </source>
</evidence>
<evidence type="ECO:0000303" key="4">
    <source>
    </source>
</evidence>
<protein>
    <recommendedName>
        <fullName>Cytoplasmic polyadenylation element-binding protein 2</fullName>
    </recommendedName>
</protein>
<comment type="function">
    <text evidence="1">Cytoplasmic polyadenylation element binding protein that binds to and regulates the translation of specific mRNAs.</text>
</comment>
<comment type="alternative products">
    <event type="alternative splicing"/>
    <isoform>
        <id>Q6E3F0-1</id>
        <name>a</name>
        <sequence type="displayed"/>
    </isoform>
    <isoform>
        <id>Q6E3F0-2</id>
        <name>b</name>
        <sequence type="described" ref="VSP_011934"/>
    </isoform>
    <isoform>
        <id>Q6E3F0-3</id>
        <name>c</name>
        <sequence type="described" ref="VSP_011935"/>
    </isoform>
</comment>
<feature type="chain" id="PRO_0000081514" description="Cytoplasmic polyadenylation element-binding protein 2">
    <location>
        <begin position="1"/>
        <end position="594"/>
    </location>
</feature>
<feature type="domain" description="RRM" evidence="2">
    <location>
        <begin position="458"/>
        <end position="540"/>
    </location>
</feature>
<feature type="region of interest" description="Disordered" evidence="3">
    <location>
        <begin position="72"/>
        <end position="91"/>
    </location>
</feature>
<feature type="region of interest" description="Disordered" evidence="3">
    <location>
        <begin position="367"/>
        <end position="388"/>
    </location>
</feature>
<feature type="compositionally biased region" description="Basic and acidic residues" evidence="3">
    <location>
        <begin position="72"/>
        <end position="90"/>
    </location>
</feature>
<feature type="compositionally biased region" description="Gly residues" evidence="3">
    <location>
        <begin position="367"/>
        <end position="378"/>
    </location>
</feature>
<feature type="splice variant" id="VSP_011935" description="In isoform c." evidence="4">
    <location>
        <begin position="1"/>
        <end position="195"/>
    </location>
</feature>
<feature type="splice variant" id="VSP_011934" description="In isoform b." evidence="4">
    <location>
        <begin position="1"/>
        <end position="51"/>
    </location>
</feature>
<organism>
    <name type="scientific">Caenorhabditis japonica</name>
    <dbReference type="NCBI Taxonomy" id="281687"/>
    <lineage>
        <taxon>Eukaryota</taxon>
        <taxon>Metazoa</taxon>
        <taxon>Ecdysozoa</taxon>
        <taxon>Nematoda</taxon>
        <taxon>Chromadorea</taxon>
        <taxon>Rhabditida</taxon>
        <taxon>Rhabditina</taxon>
        <taxon>Rhabditomorpha</taxon>
        <taxon>Rhabditoidea</taxon>
        <taxon>Rhabditidae</taxon>
        <taxon>Peloderinae</taxon>
        <taxon>Caenorhabditis</taxon>
    </lineage>
</organism>
<proteinExistence type="evidence at transcript level"/>
<sequence>MSKSRRVFLSMQDDDDFWGNGDRFEEEKSCLAAKAKQRSCPVVEMEEDDEEMEEKYFFKQSHLVRQRLEQMKEREKVDEEKEGVERREENGFSGKPWKFRVDSDEHEMKSDDVVTEDRSIMGTKTFNSDFDDKSAIKSSLSMSLESNDVFYANYRNFFRGRPEVHFLIRCLFEKNPETFDNQFIDLYEKTRKRLEMYPNPHINQILRRTLSSSNATETRVRSKHAVVVSNFREPDRRLGRYSKYYYHHNVGPEVYSRKVFVGGLPACVTEDDILGFFSRYGRLQVDWPSKHYGGSKSDSDPSLCSEIITPPAPLSHLSMASPPFGQINPFMSGYVAPAETRGGFLRASGFSEGGGFGGGFGGGIGGGGGFNSGSGSGNGTKSDGSTSEKRQSHLGYVFLLFEKERSVRDLVAECFEEEEGLFITLESSLEPIRVQIRPWLLADAEFLMDFNVPINTKLVAFIGGVPRPLKAVELAHFFEQTYGNVVCVGIDIDNKFKYPRGSGRVAFSNYDAYVQAITDRYIVLDHEDIHKRVEIKPYFFHNQSCEECSGRYHRQHAPFFCPSLECFQYYCEPCWHKMHAHPSRFHHMPVVKGV</sequence>
<dbReference type="EMBL" id="AY589621">
    <property type="protein sequence ID" value="AAT72422.1"/>
    <property type="molecule type" value="Genomic_DNA"/>
</dbReference>
<dbReference type="EMBL" id="AY589621">
    <property type="protein sequence ID" value="AAT72423.1"/>
    <property type="molecule type" value="Genomic_DNA"/>
</dbReference>
<dbReference type="EMBL" id="AY589621">
    <property type="protein sequence ID" value="AAT72424.1"/>
    <property type="molecule type" value="Genomic_DNA"/>
</dbReference>
<dbReference type="EMBL" id="AY589614">
    <property type="protein sequence ID" value="AAT72451.1"/>
    <property type="molecule type" value="mRNA"/>
</dbReference>
<dbReference type="EMBL" id="AY589615">
    <property type="protein sequence ID" value="AAT72452.1"/>
    <property type="molecule type" value="mRNA"/>
</dbReference>
<dbReference type="EMBL" id="AY589616">
    <property type="protein sequence ID" value="AAT72453.1"/>
    <property type="molecule type" value="mRNA"/>
</dbReference>
<dbReference type="SMR" id="Q6E3F0"/>
<dbReference type="FunCoup" id="Q6E3F0">
    <property type="interactions" value="3"/>
</dbReference>
<dbReference type="STRING" id="281687.Q6E3F0"/>
<dbReference type="eggNOG" id="KOG0129">
    <property type="taxonomic scope" value="Eukaryota"/>
</dbReference>
<dbReference type="HOGENOM" id="CLU_034584_0_0_1"/>
<dbReference type="InParanoid" id="Q6E3F0"/>
<dbReference type="Proteomes" id="UP000005237">
    <property type="component" value="Unassembled WGS sequence"/>
</dbReference>
<dbReference type="GO" id="GO:0005737">
    <property type="term" value="C:cytoplasm"/>
    <property type="evidence" value="ECO:0007669"/>
    <property type="project" value="TreeGrafter"/>
</dbReference>
<dbReference type="GO" id="GO:0005634">
    <property type="term" value="C:nucleus"/>
    <property type="evidence" value="ECO:0007669"/>
    <property type="project" value="TreeGrafter"/>
</dbReference>
<dbReference type="GO" id="GO:0003730">
    <property type="term" value="F:mRNA 3'-UTR binding"/>
    <property type="evidence" value="ECO:0007669"/>
    <property type="project" value="InterPro"/>
</dbReference>
<dbReference type="GO" id="GO:0000900">
    <property type="term" value="F:mRNA regulatory element binding translation repressor activity"/>
    <property type="evidence" value="ECO:0007669"/>
    <property type="project" value="TreeGrafter"/>
</dbReference>
<dbReference type="GO" id="GO:0043022">
    <property type="term" value="F:ribosome binding"/>
    <property type="evidence" value="ECO:0007669"/>
    <property type="project" value="TreeGrafter"/>
</dbReference>
<dbReference type="GO" id="GO:0008135">
    <property type="term" value="F:translation factor activity, RNA binding"/>
    <property type="evidence" value="ECO:0007669"/>
    <property type="project" value="TreeGrafter"/>
</dbReference>
<dbReference type="GO" id="GO:2000766">
    <property type="term" value="P:negative regulation of cytoplasmic translation"/>
    <property type="evidence" value="ECO:0007669"/>
    <property type="project" value="TreeGrafter"/>
</dbReference>
<dbReference type="CDD" id="cd19757">
    <property type="entry name" value="Bbox1"/>
    <property type="match status" value="1"/>
</dbReference>
<dbReference type="CDD" id="cd12726">
    <property type="entry name" value="RRM2_CPEB2_like"/>
    <property type="match status" value="1"/>
</dbReference>
<dbReference type="FunFam" id="3.30.70.330:FF:000483">
    <property type="entry name" value="Cytoplasmic polyadenylation element-binding protein 2"/>
    <property type="match status" value="1"/>
</dbReference>
<dbReference type="Gene3D" id="3.30.70.330">
    <property type="match status" value="2"/>
</dbReference>
<dbReference type="Gene3D" id="4.10.640.40">
    <property type="entry name" value="Cytoplasmic polyadenylation element-binding protein, ZZ domain"/>
    <property type="match status" value="1"/>
</dbReference>
<dbReference type="InterPro" id="IPR032296">
    <property type="entry name" value="CEBP_ZZ"/>
</dbReference>
<dbReference type="InterPro" id="IPR038446">
    <property type="entry name" value="CEBP_ZZ_sf"/>
</dbReference>
<dbReference type="InterPro" id="IPR034819">
    <property type="entry name" value="CPEB"/>
</dbReference>
<dbReference type="InterPro" id="IPR012677">
    <property type="entry name" value="Nucleotide-bd_a/b_plait_sf"/>
</dbReference>
<dbReference type="InterPro" id="IPR035979">
    <property type="entry name" value="RBD_domain_sf"/>
</dbReference>
<dbReference type="InterPro" id="IPR000504">
    <property type="entry name" value="RRM_dom"/>
</dbReference>
<dbReference type="PANTHER" id="PTHR12566">
    <property type="entry name" value="CYTOPLASMIC POLYADENYLATION ELEMENT BINDING PROTEIN CPEB"/>
    <property type="match status" value="1"/>
</dbReference>
<dbReference type="PANTHER" id="PTHR12566:SF12">
    <property type="entry name" value="TRANSLATIONAL REGULATOR ORB2"/>
    <property type="match status" value="1"/>
</dbReference>
<dbReference type="Pfam" id="PF16366">
    <property type="entry name" value="CEBP_ZZ"/>
    <property type="match status" value="1"/>
</dbReference>
<dbReference type="Pfam" id="PF16367">
    <property type="entry name" value="RRM_7"/>
    <property type="match status" value="2"/>
</dbReference>
<dbReference type="SMART" id="SM00360">
    <property type="entry name" value="RRM"/>
    <property type="match status" value="2"/>
</dbReference>
<dbReference type="SUPFAM" id="SSF54928">
    <property type="entry name" value="RNA-binding domain, RBD"/>
    <property type="match status" value="2"/>
</dbReference>
<dbReference type="PROSITE" id="PS50102">
    <property type="entry name" value="RRM"/>
    <property type="match status" value="1"/>
</dbReference>
<keyword id="KW-0025">Alternative splicing</keyword>
<keyword id="KW-1185">Reference proteome</keyword>
<keyword id="KW-0694">RNA-binding</keyword>
<accession>Q6E3F0</accession>
<accession>Q6E3E8</accession>
<accession>Q6E3E9</accession>
<gene>
    <name type="primary">cpb-2</name>
</gene>
<reference key="1">
    <citation type="journal article" date="2004" name="Genome Res.">
        <title>A phylogeny of Caenorhabditis reveals frequent loss of introns during nematode evolution.</title>
        <authorList>
            <person name="Cho S."/>
            <person name="Jin S.W."/>
            <person name="Cohen A."/>
            <person name="Ellis R.E."/>
        </authorList>
    </citation>
    <scope>NUCLEOTIDE SEQUENCE [GENOMIC DNA / MRNA] (ISOFORMS A; B AND C)</scope>
</reference>
<name>CPB2_CAEJA</name>